<dbReference type="EC" id="2.7.7.18" evidence="1"/>
<dbReference type="EMBL" id="BA000036">
    <property type="protein sequence ID" value="BAB99745.1"/>
    <property type="status" value="ALT_INIT"/>
    <property type="molecule type" value="Genomic_DNA"/>
</dbReference>
<dbReference type="EMBL" id="BX927155">
    <property type="protein sequence ID" value="CAF21017.1"/>
    <property type="status" value="ALT_INIT"/>
    <property type="molecule type" value="Genomic_DNA"/>
</dbReference>
<dbReference type="RefSeq" id="NP_601553.1">
    <property type="nucleotide sequence ID" value="NC_003450.3"/>
</dbReference>
<dbReference type="RefSeq" id="WP_011015061.1">
    <property type="nucleotide sequence ID" value="NC_006958.1"/>
</dbReference>
<dbReference type="SMR" id="Q8NN57"/>
<dbReference type="STRING" id="196627.cg2584"/>
<dbReference type="GeneID" id="1020303"/>
<dbReference type="KEGG" id="cgb:cg2584"/>
<dbReference type="KEGG" id="cgl:Cgl2352"/>
<dbReference type="PATRIC" id="fig|196627.13.peg.2288"/>
<dbReference type="eggNOG" id="COG1057">
    <property type="taxonomic scope" value="Bacteria"/>
</dbReference>
<dbReference type="HOGENOM" id="CLU_069765_1_1_11"/>
<dbReference type="OrthoDB" id="5295945at2"/>
<dbReference type="BioCyc" id="CORYNE:G18NG-11949-MONOMER"/>
<dbReference type="UniPathway" id="UPA00253">
    <property type="reaction ID" value="UER00332"/>
</dbReference>
<dbReference type="Proteomes" id="UP000000582">
    <property type="component" value="Chromosome"/>
</dbReference>
<dbReference type="Proteomes" id="UP000001009">
    <property type="component" value="Chromosome"/>
</dbReference>
<dbReference type="GO" id="GO:0005524">
    <property type="term" value="F:ATP binding"/>
    <property type="evidence" value="ECO:0007669"/>
    <property type="project" value="UniProtKB-KW"/>
</dbReference>
<dbReference type="GO" id="GO:0004515">
    <property type="term" value="F:nicotinate-nucleotide adenylyltransferase activity"/>
    <property type="evidence" value="ECO:0007669"/>
    <property type="project" value="UniProtKB-UniRule"/>
</dbReference>
<dbReference type="GO" id="GO:0009435">
    <property type="term" value="P:NAD biosynthetic process"/>
    <property type="evidence" value="ECO:0007669"/>
    <property type="project" value="UniProtKB-UniRule"/>
</dbReference>
<dbReference type="CDD" id="cd02165">
    <property type="entry name" value="NMNAT"/>
    <property type="match status" value="1"/>
</dbReference>
<dbReference type="FunFam" id="3.40.50.620:FF:000039">
    <property type="entry name" value="Probable nicotinate-nucleotide adenylyltransferase"/>
    <property type="match status" value="1"/>
</dbReference>
<dbReference type="Gene3D" id="3.40.50.620">
    <property type="entry name" value="HUPs"/>
    <property type="match status" value="1"/>
</dbReference>
<dbReference type="HAMAP" id="MF_00244">
    <property type="entry name" value="NaMN_adenylyltr"/>
    <property type="match status" value="1"/>
</dbReference>
<dbReference type="InterPro" id="IPR004821">
    <property type="entry name" value="Cyt_trans-like"/>
</dbReference>
<dbReference type="InterPro" id="IPR005248">
    <property type="entry name" value="NadD/NMNAT"/>
</dbReference>
<dbReference type="InterPro" id="IPR014729">
    <property type="entry name" value="Rossmann-like_a/b/a_fold"/>
</dbReference>
<dbReference type="NCBIfam" id="TIGR00125">
    <property type="entry name" value="cyt_tran_rel"/>
    <property type="match status" value="1"/>
</dbReference>
<dbReference type="NCBIfam" id="TIGR00482">
    <property type="entry name" value="nicotinate (nicotinamide) nucleotide adenylyltransferase"/>
    <property type="match status" value="1"/>
</dbReference>
<dbReference type="NCBIfam" id="NF000840">
    <property type="entry name" value="PRK00071.1-3"/>
    <property type="match status" value="1"/>
</dbReference>
<dbReference type="PANTHER" id="PTHR39321">
    <property type="entry name" value="NICOTINATE-NUCLEOTIDE ADENYLYLTRANSFERASE-RELATED"/>
    <property type="match status" value="1"/>
</dbReference>
<dbReference type="PANTHER" id="PTHR39321:SF3">
    <property type="entry name" value="PHOSPHOPANTETHEINE ADENYLYLTRANSFERASE"/>
    <property type="match status" value="1"/>
</dbReference>
<dbReference type="Pfam" id="PF01467">
    <property type="entry name" value="CTP_transf_like"/>
    <property type="match status" value="1"/>
</dbReference>
<dbReference type="SUPFAM" id="SSF52374">
    <property type="entry name" value="Nucleotidylyl transferase"/>
    <property type="match status" value="1"/>
</dbReference>
<protein>
    <recommendedName>
        <fullName evidence="1">Probable nicotinate-nucleotide adenylyltransferase</fullName>
        <ecNumber evidence="1">2.7.7.18</ecNumber>
    </recommendedName>
    <alternativeName>
        <fullName evidence="1">Deamido-NAD(+) diphosphorylase</fullName>
    </alternativeName>
    <alternativeName>
        <fullName evidence="1">Deamido-NAD(+) pyrophosphorylase</fullName>
    </alternativeName>
    <alternativeName>
        <fullName evidence="1">Nicotinate mononucleotide adenylyltransferase</fullName>
        <shortName evidence="1">NaMN adenylyltransferase</shortName>
    </alternativeName>
</protein>
<name>NADD_CORGL</name>
<evidence type="ECO:0000255" key="1">
    <source>
        <dbReference type="HAMAP-Rule" id="MF_00244"/>
    </source>
</evidence>
<evidence type="ECO:0000305" key="2"/>
<keyword id="KW-0067">ATP-binding</keyword>
<keyword id="KW-0520">NAD</keyword>
<keyword id="KW-0547">Nucleotide-binding</keyword>
<keyword id="KW-0548">Nucleotidyltransferase</keyword>
<keyword id="KW-0662">Pyridine nucleotide biosynthesis</keyword>
<keyword id="KW-1185">Reference proteome</keyword>
<keyword id="KW-0808">Transferase</keyword>
<sequence length="218" mass="24581">MTTTVKRRARIGIMGGTFDPIHNGHLVAGSEVADRFDLDLVVYVPTGQPWQKANKKVSPAEDRYLMTVIATASNPRFMVSRVDIDRGGDTYTIDTLQDLSKQYPDAQLYFITGADALAQIVTWRDWEKTFELAHFVGVTRPGYELDGNIIPEMHQDRVSLVDIPAMAISSTDCRERSSEERPVWYLVPDGVVQYIAKRQLYRPEGSDKDMDPKGQNQA</sequence>
<proteinExistence type="inferred from homology"/>
<reference key="1">
    <citation type="journal article" date="2003" name="Appl. Microbiol. Biotechnol.">
        <title>The Corynebacterium glutamicum genome: features and impacts on biotechnological processes.</title>
        <authorList>
            <person name="Ikeda M."/>
            <person name="Nakagawa S."/>
        </authorList>
    </citation>
    <scope>NUCLEOTIDE SEQUENCE [LARGE SCALE GENOMIC DNA]</scope>
    <source>
        <strain>ATCC 13032 / DSM 20300 / JCM 1318 / BCRC 11384 / CCUG 27702 / LMG 3730 / NBRC 12168 / NCIMB 10025 / NRRL B-2784 / 534</strain>
    </source>
</reference>
<reference key="2">
    <citation type="journal article" date="2003" name="J. Biotechnol.">
        <title>The complete Corynebacterium glutamicum ATCC 13032 genome sequence and its impact on the production of L-aspartate-derived amino acids and vitamins.</title>
        <authorList>
            <person name="Kalinowski J."/>
            <person name="Bathe B."/>
            <person name="Bartels D."/>
            <person name="Bischoff N."/>
            <person name="Bott M."/>
            <person name="Burkovski A."/>
            <person name="Dusch N."/>
            <person name="Eggeling L."/>
            <person name="Eikmanns B.J."/>
            <person name="Gaigalat L."/>
            <person name="Goesmann A."/>
            <person name="Hartmann M."/>
            <person name="Huthmacher K."/>
            <person name="Kraemer R."/>
            <person name="Linke B."/>
            <person name="McHardy A.C."/>
            <person name="Meyer F."/>
            <person name="Moeckel B."/>
            <person name="Pfefferle W."/>
            <person name="Puehler A."/>
            <person name="Rey D.A."/>
            <person name="Rueckert C."/>
            <person name="Rupp O."/>
            <person name="Sahm H."/>
            <person name="Wendisch V.F."/>
            <person name="Wiegraebe I."/>
            <person name="Tauch A."/>
        </authorList>
    </citation>
    <scope>NUCLEOTIDE SEQUENCE [LARGE SCALE GENOMIC DNA]</scope>
    <source>
        <strain>ATCC 13032 / DSM 20300 / JCM 1318 / BCRC 11384 / CCUG 27702 / LMG 3730 / NBRC 12168 / NCIMB 10025 / NRRL B-2784 / 534</strain>
    </source>
</reference>
<accession>Q8NN57</accession>
<comment type="function">
    <text evidence="1">Catalyzes the reversible adenylation of nicotinate mononucleotide (NaMN) to nicotinic acid adenine dinucleotide (NaAD).</text>
</comment>
<comment type="catalytic activity">
    <reaction evidence="1">
        <text>nicotinate beta-D-ribonucleotide + ATP + H(+) = deamido-NAD(+) + diphosphate</text>
        <dbReference type="Rhea" id="RHEA:22860"/>
        <dbReference type="ChEBI" id="CHEBI:15378"/>
        <dbReference type="ChEBI" id="CHEBI:30616"/>
        <dbReference type="ChEBI" id="CHEBI:33019"/>
        <dbReference type="ChEBI" id="CHEBI:57502"/>
        <dbReference type="ChEBI" id="CHEBI:58437"/>
        <dbReference type="EC" id="2.7.7.18"/>
    </reaction>
</comment>
<comment type="pathway">
    <text evidence="1">Cofactor biosynthesis; NAD(+) biosynthesis; deamido-NAD(+) from nicotinate D-ribonucleotide: step 1/1.</text>
</comment>
<comment type="similarity">
    <text evidence="1">Belongs to the NadD family.</text>
</comment>
<comment type="sequence caution" evidence="2">
    <conflict type="erroneous initiation">
        <sequence resource="EMBL-CDS" id="BAB99745"/>
    </conflict>
</comment>
<comment type="sequence caution" evidence="2">
    <conflict type="erroneous initiation">
        <sequence resource="EMBL-CDS" id="CAF21017"/>
    </conflict>
</comment>
<feature type="chain" id="PRO_0000181406" description="Probable nicotinate-nucleotide adenylyltransferase">
    <location>
        <begin position="1"/>
        <end position="218"/>
    </location>
</feature>
<organism>
    <name type="scientific">Corynebacterium glutamicum (strain ATCC 13032 / DSM 20300 / JCM 1318 / BCRC 11384 / CCUG 27702 / LMG 3730 / NBRC 12168 / NCIMB 10025 / NRRL B-2784 / 534)</name>
    <dbReference type="NCBI Taxonomy" id="196627"/>
    <lineage>
        <taxon>Bacteria</taxon>
        <taxon>Bacillati</taxon>
        <taxon>Actinomycetota</taxon>
        <taxon>Actinomycetes</taxon>
        <taxon>Mycobacteriales</taxon>
        <taxon>Corynebacteriaceae</taxon>
        <taxon>Corynebacterium</taxon>
    </lineage>
</organism>
<gene>
    <name evidence="1" type="primary">nadD</name>
    <name type="ordered locus">Cgl2352</name>
    <name type="ordered locus">cg2584</name>
</gene>